<organism>
    <name type="scientific">Bradyrhizobium diazoefficiens (strain JCM 10833 / BCRC 13528 / IAM 13628 / NBRC 14792 / USDA 110)</name>
    <dbReference type="NCBI Taxonomy" id="224911"/>
    <lineage>
        <taxon>Bacteria</taxon>
        <taxon>Pseudomonadati</taxon>
        <taxon>Pseudomonadota</taxon>
        <taxon>Alphaproteobacteria</taxon>
        <taxon>Hyphomicrobiales</taxon>
        <taxon>Nitrobacteraceae</taxon>
        <taxon>Bradyrhizobium</taxon>
    </lineage>
</organism>
<gene>
    <name evidence="2" type="primary">frc</name>
    <name type="ordered locus">bll3156</name>
</gene>
<accession>Q89QH2</accession>
<protein>
    <recommendedName>
        <fullName>Formyl-CoA:oxalate CoA-transferase</fullName>
        <shortName>FCOCT</shortName>
        <ecNumber evidence="2">2.8.3.16</ecNumber>
    </recommendedName>
    <alternativeName>
        <fullName evidence="2">Formyl-coenzyme A transferase</fullName>
        <shortName evidence="2">Formyl-CoA transferase</shortName>
    </alternativeName>
</protein>
<feature type="chain" id="PRO_0000194721" description="Formyl-CoA:oxalate CoA-transferase">
    <location>
        <begin position="1"/>
        <end position="425"/>
    </location>
</feature>
<feature type="active site" description="Nucleophile" evidence="2">
    <location>
        <position position="168"/>
    </location>
</feature>
<feature type="binding site" evidence="1">
    <location>
        <begin position="17"/>
        <end position="18"/>
    </location>
    <ligand>
        <name>CoA</name>
        <dbReference type="ChEBI" id="CHEBI:57287"/>
    </ligand>
</feature>
<feature type="binding site" evidence="2">
    <location>
        <position position="38"/>
    </location>
    <ligand>
        <name>CoA</name>
        <dbReference type="ChEBI" id="CHEBI:57287"/>
    </ligand>
</feature>
<feature type="binding site" evidence="1">
    <location>
        <begin position="72"/>
        <end position="75"/>
    </location>
    <ligand>
        <name>CoA</name>
        <dbReference type="ChEBI" id="CHEBI:57287"/>
    </ligand>
</feature>
<feature type="binding site" evidence="1">
    <location>
        <begin position="96"/>
        <end position="98"/>
    </location>
    <ligand>
        <name>CoA</name>
        <dbReference type="ChEBI" id="CHEBI:57287"/>
    </ligand>
</feature>
<feature type="binding site" evidence="2">
    <location>
        <position position="104"/>
    </location>
    <ligand>
        <name>CoA</name>
        <dbReference type="ChEBI" id="CHEBI:57287"/>
    </ligand>
</feature>
<feature type="binding site" evidence="1">
    <location>
        <begin position="136"/>
        <end position="139"/>
    </location>
    <ligand>
        <name>CoA</name>
        <dbReference type="ChEBI" id="CHEBI:57287"/>
    </ligand>
</feature>
<feature type="binding site" evidence="1">
    <location>
        <begin position="247"/>
        <end position="249"/>
    </location>
    <ligand>
        <name>substrate</name>
    </ligand>
</feature>
<keyword id="KW-1185">Reference proteome</keyword>
<keyword id="KW-0808">Transferase</keyword>
<dbReference type="EC" id="2.8.3.16" evidence="2"/>
<dbReference type="EMBL" id="BA000040">
    <property type="protein sequence ID" value="BAC48421.1"/>
    <property type="molecule type" value="Genomic_DNA"/>
</dbReference>
<dbReference type="RefSeq" id="NP_769796.1">
    <property type="nucleotide sequence ID" value="NC_004463.1"/>
</dbReference>
<dbReference type="RefSeq" id="WP_011085940.1">
    <property type="nucleotide sequence ID" value="NC_004463.1"/>
</dbReference>
<dbReference type="SMR" id="Q89QH2"/>
<dbReference type="FunCoup" id="Q89QH2">
    <property type="interactions" value="1"/>
</dbReference>
<dbReference type="STRING" id="224911.AAV28_12815"/>
<dbReference type="EnsemblBacteria" id="BAC48421">
    <property type="protein sequence ID" value="BAC48421"/>
    <property type="gene ID" value="BAC48421"/>
</dbReference>
<dbReference type="GeneID" id="46490196"/>
<dbReference type="KEGG" id="bja:bll3156"/>
<dbReference type="PATRIC" id="fig|224911.44.peg.2796"/>
<dbReference type="eggNOG" id="COG1804">
    <property type="taxonomic scope" value="Bacteria"/>
</dbReference>
<dbReference type="HOGENOM" id="CLU_033975_2_1_5"/>
<dbReference type="InParanoid" id="Q89QH2"/>
<dbReference type="OrthoDB" id="9806585at2"/>
<dbReference type="PhylomeDB" id="Q89QH2"/>
<dbReference type="BRENDA" id="2.8.3.16">
    <property type="organism ID" value="929"/>
</dbReference>
<dbReference type="UniPathway" id="UPA00540">
    <property type="reaction ID" value="UER00598"/>
</dbReference>
<dbReference type="Proteomes" id="UP000002526">
    <property type="component" value="Chromosome"/>
</dbReference>
<dbReference type="GO" id="GO:0008410">
    <property type="term" value="F:CoA-transferase activity"/>
    <property type="evidence" value="ECO:0000318"/>
    <property type="project" value="GO_Central"/>
</dbReference>
<dbReference type="GO" id="GO:0033608">
    <property type="term" value="F:formyl-CoA transferase activity"/>
    <property type="evidence" value="ECO:0007669"/>
    <property type="project" value="UniProtKB-EC"/>
</dbReference>
<dbReference type="GO" id="GO:0033611">
    <property type="term" value="P:oxalate catabolic process"/>
    <property type="evidence" value="ECO:0007669"/>
    <property type="project" value="UniProtKB-UniRule"/>
</dbReference>
<dbReference type="Gene3D" id="3.40.50.10540">
    <property type="entry name" value="Crotonobetainyl-coa:carnitine coa-transferase, domain 1"/>
    <property type="match status" value="1"/>
</dbReference>
<dbReference type="Gene3D" id="3.30.1540.10">
    <property type="entry name" value="formyl-coa transferase, domain 3"/>
    <property type="match status" value="1"/>
</dbReference>
<dbReference type="HAMAP" id="MF_00742">
    <property type="entry name" value="Formyl_CoA_transfer"/>
    <property type="match status" value="1"/>
</dbReference>
<dbReference type="InterPro" id="IPR050483">
    <property type="entry name" value="CoA-transferase_III_domain"/>
</dbReference>
<dbReference type="InterPro" id="IPR003673">
    <property type="entry name" value="CoA-Trfase_fam_III"/>
</dbReference>
<dbReference type="InterPro" id="IPR044855">
    <property type="entry name" value="CoA-Trfase_III_dom3_sf"/>
</dbReference>
<dbReference type="InterPro" id="IPR023606">
    <property type="entry name" value="CoA-Trfase_III_dom_1_sf"/>
</dbReference>
<dbReference type="InterPro" id="IPR017659">
    <property type="entry name" value="Formyl_CoA_transfer"/>
</dbReference>
<dbReference type="NCBIfam" id="TIGR03253">
    <property type="entry name" value="oxalate_frc"/>
    <property type="match status" value="1"/>
</dbReference>
<dbReference type="NCBIfam" id="NF003809">
    <property type="entry name" value="PRK05398.1"/>
    <property type="match status" value="1"/>
</dbReference>
<dbReference type="PANTHER" id="PTHR48207">
    <property type="entry name" value="SUCCINATE--HYDROXYMETHYLGLUTARATE COA-TRANSFERASE"/>
    <property type="match status" value="1"/>
</dbReference>
<dbReference type="PANTHER" id="PTHR48207:SF3">
    <property type="entry name" value="SUCCINATE--HYDROXYMETHYLGLUTARATE COA-TRANSFERASE"/>
    <property type="match status" value="1"/>
</dbReference>
<dbReference type="Pfam" id="PF02515">
    <property type="entry name" value="CoA_transf_3"/>
    <property type="match status" value="1"/>
</dbReference>
<dbReference type="SUPFAM" id="SSF89796">
    <property type="entry name" value="CoA-transferase family III (CaiB/BaiF)"/>
    <property type="match status" value="1"/>
</dbReference>
<evidence type="ECO:0000250" key="1"/>
<evidence type="ECO:0000255" key="2">
    <source>
        <dbReference type="HAMAP-Rule" id="MF_00742"/>
    </source>
</evidence>
<comment type="function">
    <text evidence="1">Involved in the catabolism of oxalate and in the adapatation to low pH via the induction of the oxalate-dependent acid tolerance response (ATR). Catalyzes the transfer of the CoA moiety from formyl-CoA to oxalate (By similarity).</text>
</comment>
<comment type="catalytic activity">
    <reaction evidence="2">
        <text>formyl-CoA + oxalate = oxalyl-CoA + formate</text>
        <dbReference type="Rhea" id="RHEA:16545"/>
        <dbReference type="ChEBI" id="CHEBI:15740"/>
        <dbReference type="ChEBI" id="CHEBI:30623"/>
        <dbReference type="ChEBI" id="CHEBI:57376"/>
        <dbReference type="ChEBI" id="CHEBI:57388"/>
        <dbReference type="EC" id="2.8.3.16"/>
    </reaction>
</comment>
<comment type="pathway">
    <text evidence="2">Metabolic intermediate degradation; oxalate degradation; CO(2) and formate from oxalate: step 1/2.</text>
</comment>
<comment type="subunit">
    <text evidence="2">Homodimer.</text>
</comment>
<comment type="similarity">
    <text evidence="2">Belongs to the CoA-transferase III family. Frc subfamily.</text>
</comment>
<reference key="1">
    <citation type="journal article" date="2002" name="DNA Res.">
        <title>Complete genomic sequence of nitrogen-fixing symbiotic bacterium Bradyrhizobium japonicum USDA110.</title>
        <authorList>
            <person name="Kaneko T."/>
            <person name="Nakamura Y."/>
            <person name="Sato S."/>
            <person name="Minamisawa K."/>
            <person name="Uchiumi T."/>
            <person name="Sasamoto S."/>
            <person name="Watanabe A."/>
            <person name="Idesawa K."/>
            <person name="Iriguchi M."/>
            <person name="Kawashima K."/>
            <person name="Kohara M."/>
            <person name="Matsumoto M."/>
            <person name="Shimpo S."/>
            <person name="Tsuruoka H."/>
            <person name="Wada T."/>
            <person name="Yamada M."/>
            <person name="Tabata S."/>
        </authorList>
    </citation>
    <scope>NUCLEOTIDE SEQUENCE [LARGE SCALE GENOMIC DNA]</scope>
    <source>
        <strain>JCM 10833 / BCRC 13528 / IAM 13628 / NBRC 14792 / USDA 110</strain>
    </source>
</reference>
<sequence>MTKALTGVRILDFTHVQSGPTCTQLLAWFGADVIKVERPGVGDITRGQLQDIPNVDSLYFTMLNHNKRSITLDTKNPKGKEVLTELIKKCDVLVENFGPGVLDRMGFPWEKIQQINPKMIVASIKGFGPGPYEDCKVYENVAQCTGGAASTTGFRDGLPLVTGAQIGDSGTGLHLALGIVTALYQRTHSGKGQRVTAAMQDGVLNLARVKLRDQQRLAHGPLREYSQFGEGIPFGDAVPRAGNDSGGGQPGRILKCKGWETDPNAYIYFITQAPVWEKICDVIGEPTWKTDPNYAKPAARLPRLNEIFARIEQWTMTKTKFEAMEILNKDDIPCGPILSMKEIAEDQSLRATGTVVEVDHPTRGKYISVGNPIKLSDSPSDVQRSPLLGEHTDEILRSVLGFSDHQVADIHKSGALAPPQKQAAE</sequence>
<name>FCTA_BRADU</name>
<proteinExistence type="inferred from homology"/>